<reference key="1">
    <citation type="journal article" date="1991" name="Cell">
        <title>Expression cloning of the human IL-3 receptor cDNA reveals a shared beta subunit for the human IL-3 and GM-CSF receptors.</title>
        <authorList>
            <person name="Kitamura T."/>
            <person name="Sato N."/>
            <person name="Arai K."/>
            <person name="Miyajima A."/>
        </authorList>
    </citation>
    <scope>NUCLEOTIDE SEQUENCE [MRNA] (ISOFORM 1)</scope>
</reference>
<reference key="2">
    <citation type="journal article" date="1995" name="Biochem. Biophys. Res. Commun.">
        <title>Structure of the gene encoding the alpha subunit of the human interleukin 3 receptor.</title>
        <authorList>
            <person name="Kosugi H."/>
            <person name="Nakagawa Y."/>
            <person name="Hotta T."/>
            <person name="Saito H."/>
            <person name="Miyajima A."/>
            <person name="Arai K."/>
            <person name="Yokota T."/>
        </authorList>
    </citation>
    <scope>NUCLEOTIDE SEQUENCE [MRNA] (ISOFORM 1)</scope>
</reference>
<reference key="3">
    <citation type="journal article" date="2009" name="J. Biol. Chem.">
        <title>A new isoform of IL-3 receptor alpha with novel differentiation activity and high affinity binding mode.</title>
        <authorList>
            <person name="Chen J."/>
            <person name="Olsen J."/>
            <person name="Ford S."/>
            <person name="Mirza S."/>
            <person name="Walker A."/>
            <person name="Murphy J.M."/>
            <person name="Young I.G."/>
        </authorList>
    </citation>
    <scope>NUCLEOTIDE SEQUENCE [MRNA] (ISOFORM 2)</scope>
    <scope>ALTERNATIVE SPLICING</scope>
</reference>
<reference key="4">
    <citation type="journal article" date="2004" name="Nat. Genet.">
        <title>Complete sequencing and characterization of 21,243 full-length human cDNAs.</title>
        <authorList>
            <person name="Ota T."/>
            <person name="Suzuki Y."/>
            <person name="Nishikawa T."/>
            <person name="Otsuki T."/>
            <person name="Sugiyama T."/>
            <person name="Irie R."/>
            <person name="Wakamatsu A."/>
            <person name="Hayashi K."/>
            <person name="Sato H."/>
            <person name="Nagai K."/>
            <person name="Kimura K."/>
            <person name="Makita H."/>
            <person name="Sekine M."/>
            <person name="Obayashi M."/>
            <person name="Nishi T."/>
            <person name="Shibahara T."/>
            <person name="Tanaka T."/>
            <person name="Ishii S."/>
            <person name="Yamamoto J."/>
            <person name="Saito K."/>
            <person name="Kawai Y."/>
            <person name="Isono Y."/>
            <person name="Nakamura Y."/>
            <person name="Nagahari K."/>
            <person name="Murakami K."/>
            <person name="Yasuda T."/>
            <person name="Iwayanagi T."/>
            <person name="Wagatsuma M."/>
            <person name="Shiratori A."/>
            <person name="Sudo H."/>
            <person name="Hosoiri T."/>
            <person name="Kaku Y."/>
            <person name="Kodaira H."/>
            <person name="Kondo H."/>
            <person name="Sugawara M."/>
            <person name="Takahashi M."/>
            <person name="Kanda K."/>
            <person name="Yokoi T."/>
            <person name="Furuya T."/>
            <person name="Kikkawa E."/>
            <person name="Omura Y."/>
            <person name="Abe K."/>
            <person name="Kamihara K."/>
            <person name="Katsuta N."/>
            <person name="Sato K."/>
            <person name="Tanikawa M."/>
            <person name="Yamazaki M."/>
            <person name="Ninomiya K."/>
            <person name="Ishibashi T."/>
            <person name="Yamashita H."/>
            <person name="Murakawa K."/>
            <person name="Fujimori K."/>
            <person name="Tanai H."/>
            <person name="Kimata M."/>
            <person name="Watanabe M."/>
            <person name="Hiraoka S."/>
            <person name="Chiba Y."/>
            <person name="Ishida S."/>
            <person name="Ono Y."/>
            <person name="Takiguchi S."/>
            <person name="Watanabe S."/>
            <person name="Yosida M."/>
            <person name="Hotuta T."/>
            <person name="Kusano J."/>
            <person name="Kanehori K."/>
            <person name="Takahashi-Fujii A."/>
            <person name="Hara H."/>
            <person name="Tanase T.-O."/>
            <person name="Nomura Y."/>
            <person name="Togiya S."/>
            <person name="Komai F."/>
            <person name="Hara R."/>
            <person name="Takeuchi K."/>
            <person name="Arita M."/>
            <person name="Imose N."/>
            <person name="Musashino K."/>
            <person name="Yuuki H."/>
            <person name="Oshima A."/>
            <person name="Sasaki N."/>
            <person name="Aotsuka S."/>
            <person name="Yoshikawa Y."/>
            <person name="Matsunawa H."/>
            <person name="Ichihara T."/>
            <person name="Shiohata N."/>
            <person name="Sano S."/>
            <person name="Moriya S."/>
            <person name="Momiyama H."/>
            <person name="Satoh N."/>
            <person name="Takami S."/>
            <person name="Terashima Y."/>
            <person name="Suzuki O."/>
            <person name="Nakagawa S."/>
            <person name="Senoh A."/>
            <person name="Mizoguchi H."/>
            <person name="Goto Y."/>
            <person name="Shimizu F."/>
            <person name="Wakebe H."/>
            <person name="Hishigaki H."/>
            <person name="Watanabe T."/>
            <person name="Sugiyama A."/>
            <person name="Takemoto M."/>
            <person name="Kawakami B."/>
            <person name="Yamazaki M."/>
            <person name="Watanabe K."/>
            <person name="Kumagai A."/>
            <person name="Itakura S."/>
            <person name="Fukuzumi Y."/>
            <person name="Fujimori Y."/>
            <person name="Komiyama M."/>
            <person name="Tashiro H."/>
            <person name="Tanigami A."/>
            <person name="Fujiwara T."/>
            <person name="Ono T."/>
            <person name="Yamada K."/>
            <person name="Fujii Y."/>
            <person name="Ozaki K."/>
            <person name="Hirao M."/>
            <person name="Ohmori Y."/>
            <person name="Kawabata A."/>
            <person name="Hikiji T."/>
            <person name="Kobatake N."/>
            <person name="Inagaki H."/>
            <person name="Ikema Y."/>
            <person name="Okamoto S."/>
            <person name="Okitani R."/>
            <person name="Kawakami T."/>
            <person name="Noguchi S."/>
            <person name="Itoh T."/>
            <person name="Shigeta K."/>
            <person name="Senba T."/>
            <person name="Matsumura K."/>
            <person name="Nakajima Y."/>
            <person name="Mizuno T."/>
            <person name="Morinaga M."/>
            <person name="Sasaki M."/>
            <person name="Togashi T."/>
            <person name="Oyama M."/>
            <person name="Hata H."/>
            <person name="Watanabe M."/>
            <person name="Komatsu T."/>
            <person name="Mizushima-Sugano J."/>
            <person name="Satoh T."/>
            <person name="Shirai Y."/>
            <person name="Takahashi Y."/>
            <person name="Nakagawa K."/>
            <person name="Okumura K."/>
            <person name="Nagase T."/>
            <person name="Nomura N."/>
            <person name="Kikuchi H."/>
            <person name="Masuho Y."/>
            <person name="Yamashita R."/>
            <person name="Nakai K."/>
            <person name="Yada T."/>
            <person name="Nakamura Y."/>
            <person name="Ohara O."/>
            <person name="Isogai T."/>
            <person name="Sugano S."/>
        </authorList>
    </citation>
    <scope>NUCLEOTIDE SEQUENCE [LARGE SCALE MRNA] (ISOFORM 1)</scope>
    <source>
        <tissue>Lung</tissue>
    </source>
</reference>
<reference key="5">
    <citation type="submission" date="2004-10" db="EMBL/GenBank/DDBJ databases">
        <authorList>
            <consortium name="SeattleSNPs variation discovery resource"/>
        </authorList>
    </citation>
    <scope>NUCLEOTIDE SEQUENCE [GENOMIC DNA]</scope>
    <scope>VARIANTS THR-12; GLY-77; THR-123 AND LEU-323</scope>
</reference>
<reference key="6">
    <citation type="journal article" date="2005" name="Nature">
        <title>The DNA sequence of the human X chromosome.</title>
        <authorList>
            <person name="Ross M.T."/>
            <person name="Grafham D.V."/>
            <person name="Coffey A.J."/>
            <person name="Scherer S."/>
            <person name="McLay K."/>
            <person name="Muzny D."/>
            <person name="Platzer M."/>
            <person name="Howell G.R."/>
            <person name="Burrows C."/>
            <person name="Bird C.P."/>
            <person name="Frankish A."/>
            <person name="Lovell F.L."/>
            <person name="Howe K.L."/>
            <person name="Ashurst J.L."/>
            <person name="Fulton R.S."/>
            <person name="Sudbrak R."/>
            <person name="Wen G."/>
            <person name="Jones M.C."/>
            <person name="Hurles M.E."/>
            <person name="Andrews T.D."/>
            <person name="Scott C.E."/>
            <person name="Searle S."/>
            <person name="Ramser J."/>
            <person name="Whittaker A."/>
            <person name="Deadman R."/>
            <person name="Carter N.P."/>
            <person name="Hunt S.E."/>
            <person name="Chen R."/>
            <person name="Cree A."/>
            <person name="Gunaratne P."/>
            <person name="Havlak P."/>
            <person name="Hodgson A."/>
            <person name="Metzker M.L."/>
            <person name="Richards S."/>
            <person name="Scott G."/>
            <person name="Steffen D."/>
            <person name="Sodergren E."/>
            <person name="Wheeler D.A."/>
            <person name="Worley K.C."/>
            <person name="Ainscough R."/>
            <person name="Ambrose K.D."/>
            <person name="Ansari-Lari M.A."/>
            <person name="Aradhya S."/>
            <person name="Ashwell R.I."/>
            <person name="Babbage A.K."/>
            <person name="Bagguley C.L."/>
            <person name="Ballabio A."/>
            <person name="Banerjee R."/>
            <person name="Barker G.E."/>
            <person name="Barlow K.F."/>
            <person name="Barrett I.P."/>
            <person name="Bates K.N."/>
            <person name="Beare D.M."/>
            <person name="Beasley H."/>
            <person name="Beasley O."/>
            <person name="Beck A."/>
            <person name="Bethel G."/>
            <person name="Blechschmidt K."/>
            <person name="Brady N."/>
            <person name="Bray-Allen S."/>
            <person name="Bridgeman A.M."/>
            <person name="Brown A.J."/>
            <person name="Brown M.J."/>
            <person name="Bonnin D."/>
            <person name="Bruford E.A."/>
            <person name="Buhay C."/>
            <person name="Burch P."/>
            <person name="Burford D."/>
            <person name="Burgess J."/>
            <person name="Burrill W."/>
            <person name="Burton J."/>
            <person name="Bye J.M."/>
            <person name="Carder C."/>
            <person name="Carrel L."/>
            <person name="Chako J."/>
            <person name="Chapman J.C."/>
            <person name="Chavez D."/>
            <person name="Chen E."/>
            <person name="Chen G."/>
            <person name="Chen Y."/>
            <person name="Chen Z."/>
            <person name="Chinault C."/>
            <person name="Ciccodicola A."/>
            <person name="Clark S.Y."/>
            <person name="Clarke G."/>
            <person name="Clee C.M."/>
            <person name="Clegg S."/>
            <person name="Clerc-Blankenburg K."/>
            <person name="Clifford K."/>
            <person name="Cobley V."/>
            <person name="Cole C.G."/>
            <person name="Conquer J.S."/>
            <person name="Corby N."/>
            <person name="Connor R.E."/>
            <person name="David R."/>
            <person name="Davies J."/>
            <person name="Davis C."/>
            <person name="Davis J."/>
            <person name="Delgado O."/>
            <person name="Deshazo D."/>
            <person name="Dhami P."/>
            <person name="Ding Y."/>
            <person name="Dinh H."/>
            <person name="Dodsworth S."/>
            <person name="Draper H."/>
            <person name="Dugan-Rocha S."/>
            <person name="Dunham A."/>
            <person name="Dunn M."/>
            <person name="Durbin K.J."/>
            <person name="Dutta I."/>
            <person name="Eades T."/>
            <person name="Ellwood M."/>
            <person name="Emery-Cohen A."/>
            <person name="Errington H."/>
            <person name="Evans K.L."/>
            <person name="Faulkner L."/>
            <person name="Francis F."/>
            <person name="Frankland J."/>
            <person name="Fraser A.E."/>
            <person name="Galgoczy P."/>
            <person name="Gilbert J."/>
            <person name="Gill R."/>
            <person name="Gloeckner G."/>
            <person name="Gregory S.G."/>
            <person name="Gribble S."/>
            <person name="Griffiths C."/>
            <person name="Grocock R."/>
            <person name="Gu Y."/>
            <person name="Gwilliam R."/>
            <person name="Hamilton C."/>
            <person name="Hart E.A."/>
            <person name="Hawes A."/>
            <person name="Heath P.D."/>
            <person name="Heitmann K."/>
            <person name="Hennig S."/>
            <person name="Hernandez J."/>
            <person name="Hinzmann B."/>
            <person name="Ho S."/>
            <person name="Hoffs M."/>
            <person name="Howden P.J."/>
            <person name="Huckle E.J."/>
            <person name="Hume J."/>
            <person name="Hunt P.J."/>
            <person name="Hunt A.R."/>
            <person name="Isherwood J."/>
            <person name="Jacob L."/>
            <person name="Johnson D."/>
            <person name="Jones S."/>
            <person name="de Jong P.J."/>
            <person name="Joseph S.S."/>
            <person name="Keenan S."/>
            <person name="Kelly S."/>
            <person name="Kershaw J.K."/>
            <person name="Khan Z."/>
            <person name="Kioschis P."/>
            <person name="Klages S."/>
            <person name="Knights A.J."/>
            <person name="Kosiura A."/>
            <person name="Kovar-Smith C."/>
            <person name="Laird G.K."/>
            <person name="Langford C."/>
            <person name="Lawlor S."/>
            <person name="Leversha M."/>
            <person name="Lewis L."/>
            <person name="Liu W."/>
            <person name="Lloyd C."/>
            <person name="Lloyd D.M."/>
            <person name="Loulseged H."/>
            <person name="Loveland J.E."/>
            <person name="Lovell J.D."/>
            <person name="Lozado R."/>
            <person name="Lu J."/>
            <person name="Lyne R."/>
            <person name="Ma J."/>
            <person name="Maheshwari M."/>
            <person name="Matthews L.H."/>
            <person name="McDowall J."/>
            <person name="McLaren S."/>
            <person name="McMurray A."/>
            <person name="Meidl P."/>
            <person name="Meitinger T."/>
            <person name="Milne S."/>
            <person name="Miner G."/>
            <person name="Mistry S.L."/>
            <person name="Morgan M."/>
            <person name="Morris S."/>
            <person name="Mueller I."/>
            <person name="Mullikin J.C."/>
            <person name="Nguyen N."/>
            <person name="Nordsiek G."/>
            <person name="Nyakatura G."/>
            <person name="O'dell C.N."/>
            <person name="Okwuonu G."/>
            <person name="Palmer S."/>
            <person name="Pandian R."/>
            <person name="Parker D."/>
            <person name="Parrish J."/>
            <person name="Pasternak S."/>
            <person name="Patel D."/>
            <person name="Pearce A.V."/>
            <person name="Pearson D.M."/>
            <person name="Pelan S.E."/>
            <person name="Perez L."/>
            <person name="Porter K.M."/>
            <person name="Ramsey Y."/>
            <person name="Reichwald K."/>
            <person name="Rhodes S."/>
            <person name="Ridler K.A."/>
            <person name="Schlessinger D."/>
            <person name="Schueler M.G."/>
            <person name="Sehra H.K."/>
            <person name="Shaw-Smith C."/>
            <person name="Shen H."/>
            <person name="Sheridan E.M."/>
            <person name="Shownkeen R."/>
            <person name="Skuce C.D."/>
            <person name="Smith M.L."/>
            <person name="Sotheran E.C."/>
            <person name="Steingruber H.E."/>
            <person name="Steward C.A."/>
            <person name="Storey R."/>
            <person name="Swann R.M."/>
            <person name="Swarbreck D."/>
            <person name="Tabor P.E."/>
            <person name="Taudien S."/>
            <person name="Taylor T."/>
            <person name="Teague B."/>
            <person name="Thomas K."/>
            <person name="Thorpe A."/>
            <person name="Timms K."/>
            <person name="Tracey A."/>
            <person name="Trevanion S."/>
            <person name="Tromans A.C."/>
            <person name="d'Urso M."/>
            <person name="Verduzco D."/>
            <person name="Villasana D."/>
            <person name="Waldron L."/>
            <person name="Wall M."/>
            <person name="Wang Q."/>
            <person name="Warren J."/>
            <person name="Warry G.L."/>
            <person name="Wei X."/>
            <person name="West A."/>
            <person name="Whitehead S.L."/>
            <person name="Whiteley M.N."/>
            <person name="Wilkinson J.E."/>
            <person name="Willey D.L."/>
            <person name="Williams G."/>
            <person name="Williams L."/>
            <person name="Williamson A."/>
            <person name="Williamson H."/>
            <person name="Wilming L."/>
            <person name="Woodmansey R.L."/>
            <person name="Wray P.W."/>
            <person name="Yen J."/>
            <person name="Zhang J."/>
            <person name="Zhou J."/>
            <person name="Zoghbi H."/>
            <person name="Zorilla S."/>
            <person name="Buck D."/>
            <person name="Reinhardt R."/>
            <person name="Poustka A."/>
            <person name="Rosenthal A."/>
            <person name="Lehrach H."/>
            <person name="Meindl A."/>
            <person name="Minx P.J."/>
            <person name="Hillier L.W."/>
            <person name="Willard H.F."/>
            <person name="Wilson R.K."/>
            <person name="Waterston R.H."/>
            <person name="Rice C.M."/>
            <person name="Vaudin M."/>
            <person name="Coulson A."/>
            <person name="Nelson D.L."/>
            <person name="Weinstock G."/>
            <person name="Sulston J.E."/>
            <person name="Durbin R.M."/>
            <person name="Hubbard T."/>
            <person name="Gibbs R.A."/>
            <person name="Beck S."/>
            <person name="Rogers J."/>
            <person name="Bentley D.R."/>
        </authorList>
    </citation>
    <scope>NUCLEOTIDE SEQUENCE [LARGE SCALE GENOMIC DNA]</scope>
    <scope>VARIANT THR-12</scope>
</reference>
<reference key="7">
    <citation type="journal article" date="2004" name="Genome Res.">
        <title>The status, quality, and expansion of the NIH full-length cDNA project: the Mammalian Gene Collection (MGC).</title>
        <authorList>
            <consortium name="The MGC Project Team"/>
        </authorList>
    </citation>
    <scope>NUCLEOTIDE SEQUENCE [LARGE SCALE MRNA] (ISOFORM 1)</scope>
    <source>
        <tissue>Brain</tissue>
    </source>
</reference>
<reference key="8">
    <citation type="journal article" date="1999" name="Stem Cells">
        <title>Correlation between IL-3 receptor expression and growth potential of human CD34+ hematopoietic cells from different tissues.</title>
        <authorList>
            <person name="Huang S."/>
            <person name="Chen Z."/>
            <person name="Yu J.F."/>
            <person name="Young D."/>
            <person name="Bashey A."/>
            <person name="Ho A.D."/>
            <person name="Law P."/>
        </authorList>
    </citation>
    <scope>FUNCTION</scope>
    <scope>TISSUE SPECIFICITY</scope>
</reference>
<reference key="9">
    <citation type="journal article" date="2024" name="Cell Commun. Signal.">
        <title>E3 ubiquitin ligase RNF128 negatively regulates the IL-3/STAT5 signaling pathway by facilitating K27-linked polyubiquitination of IL-3Ralpha.</title>
        <authorList>
            <person name="Yu J."/>
            <person name="Li J."/>
            <person name="Shen A."/>
            <person name="Liu Z."/>
            <person name="He T.S."/>
        </authorList>
    </citation>
    <scope>FUNCTION</scope>
    <scope>SUBCELLULAR LOCATION</scope>
</reference>
<reference evidence="12" key="10">
    <citation type="journal article" date="2014" name="Cell Rep.">
        <title>Dual mechanism of interleukin-3 receptor blockade by an anti-cancer antibody.</title>
        <authorList>
            <person name="Broughton S.E."/>
            <person name="Hercus T.R."/>
            <person name="Hardy M.P."/>
            <person name="McClure B.J."/>
            <person name="Nero T.L."/>
            <person name="Dottore M."/>
            <person name="Huynh H."/>
            <person name="Braley H."/>
            <person name="Barry E.F."/>
            <person name="Kan W.L."/>
            <person name="Dhagat U."/>
            <person name="Scotney P."/>
            <person name="Hartman D."/>
            <person name="Busfield S.J."/>
            <person name="Owczarek C.M."/>
            <person name="Nash A.D."/>
            <person name="Wilson N.J."/>
            <person name="Parker M.W."/>
            <person name="Lopez A.F."/>
        </authorList>
    </citation>
    <scope>X-RAY CRYSTALLOGRAPHY (2.80 ANGSTROMS) OF 20-307</scope>
    <scope>GLYCOSYLATION AT ASN-46 AND ASN-80</scope>
    <scope>DISULFIDE BONDS</scope>
</reference>
<reference evidence="13 14" key="11">
    <citation type="journal article" date="2018" name="Nat. Commun.">
        <title>A dual role for the N-terminal domain of the IL-3 receptor in cell signalling.</title>
        <authorList>
            <person name="Broughton S.E."/>
            <person name="Hercus T.R."/>
            <person name="Nero T.L."/>
            <person name="Kan W.L."/>
            <person name="Barry E.F."/>
            <person name="Dottore M."/>
            <person name="Cheung Tung Shing K.S."/>
            <person name="Morton C.J."/>
            <person name="Dhagat U."/>
            <person name="Hardy M.P."/>
            <person name="Wilson N.J."/>
            <person name="Downton M.T."/>
            <person name="Schieber C."/>
            <person name="Hughes T.P."/>
            <person name="Lopez A.F."/>
            <person name="Parker M.W."/>
        </authorList>
    </citation>
    <scope>X-RAY CRYSTALLOGRAPHY (2.40 ANGSTROMS) OF 20-307</scope>
    <scope>DISULFIDE BONDS</scope>
    <scope>FUNCTION</scope>
    <scope>INTERACTION WITH IL3</scope>
</reference>
<proteinExistence type="evidence at protein level"/>
<comment type="function">
    <text evidence="1 3 6">Cell surface receptor for IL3 expressed on hematopoietic progenitor cells, monocytes and B-lymphocytes that controls the production and differentiation of hematopoietic progenitor cells into lineage-restricted cells (PubMed:10527461). Ligand stimulation rapidly induces hetrodimerization with IL3RB, phosphorylation and enzyme activity of effector proteins such as JAK2 and PI3K that play a role in signaling cell proliferation and differentiation. Activation of JAK2 leads to STAT5-mediated transcriptional program (By similarity).</text>
</comment>
<comment type="subunit">
    <text>Interacts with IL3 (PubMed:29374162). Heterodimer of an alpha and a beta subunit. The beta subunit is common to the IL3, IL5 and GM-CSF receptors.</text>
</comment>
<comment type="interaction">
    <interactant intactId="EBI-1757512">
        <id>P26951</id>
    </interactant>
    <interactant intactId="EBI-3922513">
        <id>O95393</id>
        <label>BMP10</label>
    </interactant>
    <organismsDiffer>false</organismsDiffer>
    <experiments>3</experiments>
</comment>
<comment type="interaction">
    <interactant intactId="EBI-1757512">
        <id>P26951</id>
    </interactant>
    <interactant intactId="EBI-12822627">
        <id>O14523</id>
        <label>C2CD2L</label>
    </interactant>
    <organismsDiffer>false</organismsDiffer>
    <experiments>3</experiments>
</comment>
<comment type="interaction">
    <interactant intactId="EBI-1757512">
        <id>P26951</id>
    </interactant>
    <interactant intactId="EBI-12256978">
        <id>Q8N6F1-2</id>
        <label>CLDN19</label>
    </interactant>
    <organismsDiffer>false</organismsDiffer>
    <experiments>3</experiments>
</comment>
<comment type="interaction">
    <interactant intactId="EBI-1757512">
        <id>P26951</id>
    </interactant>
    <interactant intactId="EBI-3907816">
        <id>P54852</id>
        <label>EMP3</label>
    </interactant>
    <organismsDiffer>false</organismsDiffer>
    <experiments>3</experiments>
</comment>
<comment type="interaction">
    <interactant intactId="EBI-1757512">
        <id>P26951</id>
    </interactant>
    <interactant intactId="EBI-11991950">
        <id>Q8WWP7</id>
        <label>GIMAP1</label>
    </interactant>
    <organismsDiffer>false</organismsDiffer>
    <experiments>3</experiments>
</comment>
<comment type="interaction">
    <interactant intactId="EBI-1757512">
        <id>P26951</id>
    </interactant>
    <interactant intactId="EBI-10266796">
        <id>Q8N5M9</id>
        <label>JAGN1</label>
    </interactant>
    <organismsDiffer>false</organismsDiffer>
    <experiments>3</experiments>
</comment>
<comment type="interaction">
    <interactant intactId="EBI-1757512">
        <id>P26951</id>
    </interactant>
    <interactant intactId="EBI-399080">
        <id>Q92993</id>
        <label>KAT5</label>
    </interactant>
    <organismsDiffer>false</organismsDiffer>
    <experiments>3</experiments>
</comment>
<comment type="interaction">
    <interactant intactId="EBI-1757512">
        <id>P26951</id>
    </interactant>
    <interactant intactId="EBI-11742507">
        <id>Q8TAP4-4</id>
        <label>LMO3</label>
    </interactant>
    <organismsDiffer>false</organismsDiffer>
    <experiments>3</experiments>
</comment>
<comment type="interaction">
    <interactant intactId="EBI-1757512">
        <id>P26951</id>
    </interactant>
    <interactant intactId="EBI-10317425">
        <id>Q9NZG7</id>
        <label>NINJ2</label>
    </interactant>
    <organismsDiffer>false</organismsDiffer>
    <experiments>3</experiments>
</comment>
<comment type="interaction">
    <interactant intactId="EBI-1757512">
        <id>P26951</id>
    </interactant>
    <interactant intactId="EBI-10316423">
        <id>Q9NXK6</id>
        <label>PAQR5</label>
    </interactant>
    <organismsDiffer>false</organismsDiffer>
    <experiments>3</experiments>
</comment>
<comment type="interaction">
    <interactant intactId="EBI-1757512">
        <id>P26951</id>
    </interactant>
    <interactant intactId="EBI-1383528">
        <id>P17252</id>
        <label>PRKCA</label>
    </interactant>
    <organismsDiffer>false</organismsDiffer>
    <experiments>3</experiments>
</comment>
<comment type="interaction">
    <interactant intactId="EBI-1757512">
        <id>P26951</id>
    </interactant>
    <interactant intactId="EBI-10329948">
        <id>Q9Y6X1</id>
        <label>SERP1</label>
    </interactant>
    <organismsDiffer>false</organismsDiffer>
    <experiments>3</experiments>
</comment>
<comment type="interaction">
    <interactant intactId="EBI-1757512">
        <id>P26951</id>
    </interactant>
    <interactant intactId="EBI-9090795">
        <id>Q15047-2</id>
        <label>SETDB1</label>
    </interactant>
    <organismsDiffer>false</organismsDiffer>
    <experiments>3</experiments>
</comment>
<comment type="interaction">
    <interactant intactId="EBI-1757512">
        <id>P26951</id>
    </interactant>
    <interactant intactId="EBI-10226799">
        <id>Q0VAQ4</id>
        <label>SMAGP</label>
    </interactant>
    <organismsDiffer>false</organismsDiffer>
    <experiments>3</experiments>
</comment>
<comment type="interaction">
    <interactant intactId="EBI-1757512">
        <id>P26951</id>
    </interactant>
    <interactant intactId="EBI-13075176">
        <id>Q8N2H4</id>
        <label>SYS1</label>
    </interactant>
    <organismsDiffer>false</organismsDiffer>
    <experiments>3</experiments>
</comment>
<comment type="interaction">
    <interactant intactId="EBI-1757512">
        <id>P26951</id>
    </interactant>
    <interactant intactId="EBI-10694905">
        <id>Q5BJH2-2</id>
        <label>TMEM128</label>
    </interactant>
    <organismsDiffer>false</organismsDiffer>
    <experiments>3</experiments>
</comment>
<comment type="interaction">
    <interactant intactId="EBI-1757512">
        <id>P26951</id>
    </interactant>
    <interactant intactId="EBI-348587">
        <id>Q9BVK8</id>
        <label>TMEM147</label>
    </interactant>
    <organismsDiffer>false</organismsDiffer>
    <experiments>3</experiments>
</comment>
<comment type="interaction">
    <interactant intactId="EBI-1757512">
        <id>P26951</id>
    </interactant>
    <interactant intactId="EBI-11956809">
        <id>Q8TBM7</id>
        <label>TMEM254</label>
    </interactant>
    <organismsDiffer>false</organismsDiffer>
    <experiments>3</experiments>
</comment>
<comment type="interaction">
    <interactant intactId="EBI-1757512">
        <id>P26951</id>
    </interactant>
    <interactant intactId="EBI-6656213">
        <id>Q6PI78</id>
        <label>TMEM65</label>
    </interactant>
    <organismsDiffer>false</organismsDiffer>
    <experiments>3</experiments>
</comment>
<comment type="interaction">
    <interactant intactId="EBI-1757512">
        <id>P26951</id>
    </interactant>
    <interactant intactId="EBI-11988865">
        <id>A5PKU2</id>
        <label>TUSC5</label>
    </interactant>
    <organismsDiffer>false</organismsDiffer>
    <experiments>3</experiments>
</comment>
<comment type="interaction">
    <interactant intactId="EBI-1757512">
        <id>P26951</id>
    </interactant>
    <interactant intactId="EBI-10191195">
        <id>O95183</id>
        <label>VAMP5</label>
    </interactant>
    <organismsDiffer>false</organismsDiffer>
    <experiments>3</experiments>
</comment>
<comment type="interaction">
    <interactant intactId="EBI-1757512">
        <id>P26951</id>
    </interactant>
    <interactant intactId="EBI-359832">
        <id>P61981</id>
        <label>YWHAG</label>
    </interactant>
    <organismsDiffer>false</organismsDiffer>
    <experiments>3</experiments>
</comment>
<comment type="interaction">
    <interactant intactId="EBI-40263837">
        <id>P26951-1</id>
    </interactant>
    <interactant intactId="EBI-1811718">
        <id>P08700</id>
        <label>IL3</label>
    </interactant>
    <organismsDiffer>false</organismsDiffer>
    <experiments>5</experiments>
</comment>
<comment type="subcellular location">
    <subcellularLocation>
        <location evidence="7">Cell membrane</location>
        <topology>Single-pass type I membrane protein</topology>
    </subcellularLocation>
</comment>
<comment type="alternative products">
    <event type="alternative splicing"/>
    <isoform>
        <id>P26951-1</id>
        <name>1</name>
        <name>SP1</name>
        <sequence type="displayed"/>
    </isoform>
    <isoform>
        <id>P26951-2</id>
        <name>2</name>
        <name>SP2</name>
        <sequence type="described" ref="VSP_040622"/>
    </isoform>
</comment>
<comment type="domain">
    <text>The WSXWS motif appears to be necessary for proper protein folding and thereby efficient intracellular transport and cell-surface receptor binding.</text>
</comment>
<comment type="domain">
    <text>The box 1 motif is required for JAK interaction and/or activation.</text>
</comment>
<comment type="PTM">
    <text evidence="1 7">Ubiquitinated by RNFT2 in response to IL3. Ubiquitination leads ligand-induced degradation by the proteasome. Ubiquitinated by RNF128 via 'Lys-27'-linked polyubiquitination, facilitating its degradation through the lysosomal pathway (PubMed:38702781).</text>
</comment>
<comment type="miscellaneous">
    <text>The gene coding for this protein is located in the pseudoautosomal region 1 (PAR1) of X and Y chromosomes.</text>
</comment>
<comment type="similarity">
    <text evidence="10">Belongs to the type I cytokine receptor family. Type 5 subfamily.</text>
</comment>
<comment type="sequence caution" evidence="10">
    <conflict type="erroneous gene model prediction">
        <sequence resource="EMBL-CDS" id="BAA08393"/>
    </conflict>
</comment>
<comment type="online information" name="Atlas of Genetics and Cytogenetics in Oncology and Haematology">
    <link uri="https://atlasgeneticsoncology.org/gene/40959/IL3RA"/>
</comment>
<keyword id="KW-0002">3D-structure</keyword>
<keyword id="KW-0025">Alternative splicing</keyword>
<keyword id="KW-1003">Cell membrane</keyword>
<keyword id="KW-1015">Disulfide bond</keyword>
<keyword id="KW-0325">Glycoprotein</keyword>
<keyword id="KW-0472">Membrane</keyword>
<keyword id="KW-1267">Proteomics identification</keyword>
<keyword id="KW-0675">Receptor</keyword>
<keyword id="KW-1185">Reference proteome</keyword>
<keyword id="KW-0732">Signal</keyword>
<keyword id="KW-0812">Transmembrane</keyword>
<keyword id="KW-1133">Transmembrane helix</keyword>
<keyword id="KW-0832">Ubl conjugation</keyword>
<sequence length="378" mass="43330">MVLLWLTLLLIALPCLLQTKEDPNPPITNLRMKAKAQQLTWDLNRNVTDIECVKDADYSMPAVNNSYCQFGAISLCEVTNYTVRVANPPFSTWILFPENSGKPWAGAENLTCWIHDVDFLSCSWAVGPGAPADVQYDLYLNVANRRQQYECLHYKTDAQGTRIGCRFDDISRLSSGSQSSHILVRGRSAAFGIPCTDKFVVFSQIEILTPPNMTAKCNKTHSFMHWKMRSHFNRKFRYELQIQKRMQPVITEQVRDRTSFQLLNPGTYTVQIRARERVYEFLSAWSTPQRFECDQEEGANTRAWRTSLLIALGTLLALVCVFVICRRYLVMQRLFPRIPHMKDPIGDSFQNDKLVVWEAGKAGLEECLVTEVQVVQKT</sequence>
<protein>
    <recommendedName>
        <fullName>Interleukin-3 receptor subunit alpha</fullName>
        <shortName>IL-3 receptor subunit alpha</shortName>
        <shortName>IL-3R subunit alpha</shortName>
        <shortName>IL-3R-alpha</shortName>
        <shortName>IL-3RA</shortName>
    </recommendedName>
    <cdAntigenName>CD123</cdAntigenName>
</protein>
<name>IL3RA_HUMAN</name>
<gene>
    <name evidence="11" type="primary">IL3RA</name>
    <name type="synonym">IL3R</name>
</gene>
<feature type="signal peptide" evidence="2">
    <location>
        <begin position="1"/>
        <end position="18"/>
    </location>
</feature>
<feature type="chain" id="PRO_0000010883" description="Interleukin-3 receptor subunit alpha">
    <location>
        <begin position="19"/>
        <end position="378"/>
    </location>
</feature>
<feature type="topological domain" description="Extracellular" evidence="2">
    <location>
        <begin position="19"/>
        <end position="305"/>
    </location>
</feature>
<feature type="transmembrane region" description="Helical" evidence="2">
    <location>
        <begin position="306"/>
        <end position="325"/>
    </location>
</feature>
<feature type="topological domain" description="Cytoplasmic" evidence="2">
    <location>
        <begin position="326"/>
        <end position="378"/>
    </location>
</feature>
<feature type="short sequence motif" description="WSXWS motif">
    <location>
        <begin position="282"/>
        <end position="286"/>
    </location>
</feature>
<feature type="short sequence motif" description="Box 1 motif">
    <location>
        <begin position="334"/>
        <end position="342"/>
    </location>
</feature>
<feature type="glycosylation site" description="N-linked (GlcNAc...) asparagine" evidence="5 12">
    <location>
        <position position="46"/>
    </location>
</feature>
<feature type="glycosylation site" description="N-linked (GlcNAc...) asparagine" evidence="2">
    <location>
        <position position="64"/>
    </location>
</feature>
<feature type="glycosylation site" description="N-linked (GlcNAc...) asparagine" evidence="5 12">
    <location>
        <position position="80"/>
    </location>
</feature>
<feature type="glycosylation site" description="N-linked (GlcNAc...) asparagine" evidence="2">
    <location>
        <position position="109"/>
    </location>
</feature>
<feature type="glycosylation site" description="N-linked (GlcNAc...) asparagine" evidence="2">
    <location>
        <position position="212"/>
    </location>
</feature>
<feature type="glycosylation site" description="N-linked (GlcNAc...) asparagine" evidence="2">
    <location>
        <position position="218"/>
    </location>
</feature>
<feature type="disulfide bond" evidence="5 6">
    <location>
        <begin position="52"/>
        <end position="68"/>
    </location>
</feature>
<feature type="disulfide bond" evidence="5 6">
    <location>
        <begin position="76"/>
        <end position="195"/>
    </location>
</feature>
<feature type="disulfide bond" evidence="5 6">
    <location>
        <begin position="112"/>
        <end position="122"/>
    </location>
</feature>
<feature type="disulfide bond" evidence="5 6">
    <location>
        <begin position="151"/>
        <end position="165"/>
    </location>
</feature>
<feature type="disulfide bond" evidence="6">
    <location>
        <begin position="217"/>
        <end position="293"/>
    </location>
</feature>
<feature type="splice variant" id="VSP_040622" description="In isoform 2." evidence="9">
    <original>DPNPPITNLRMKAKAQQLTWDLNRNVTDIECVKDADYSMPAVNNSYCQFGAISLCEVTNYTVRVANPPFSTWILFPENS</original>
    <variation>G</variation>
    <location>
        <begin position="22"/>
        <end position="100"/>
    </location>
</feature>
<feature type="sequence variant" id="VAR_021113" description="In dbSNP:rs6647004." evidence="4 8">
    <original>A</original>
    <variation>T</variation>
    <location>
        <position position="12"/>
    </location>
</feature>
<feature type="sequence variant" id="VAR_021114" description="In dbSNP:rs17886756." evidence="8">
    <original>E</original>
    <variation>G</variation>
    <location>
        <position position="77"/>
    </location>
</feature>
<feature type="sequence variant" id="VAR_021115" description="In dbSNP:rs17883572." evidence="8">
    <original>S</original>
    <variation>T</variation>
    <location>
        <position position="123"/>
    </location>
</feature>
<feature type="sequence variant" id="VAR_021116" description="In dbSNP:rs17883366." evidence="8">
    <original>V</original>
    <variation>L</variation>
    <location>
        <position position="323"/>
    </location>
</feature>
<feature type="strand" evidence="16">
    <location>
        <begin position="31"/>
        <end position="33"/>
    </location>
</feature>
<feature type="turn" evidence="17">
    <location>
        <begin position="34"/>
        <end position="37"/>
    </location>
</feature>
<feature type="strand" evidence="16">
    <location>
        <begin position="38"/>
        <end position="40"/>
    </location>
</feature>
<feature type="strand" evidence="17">
    <location>
        <begin position="52"/>
        <end position="54"/>
    </location>
</feature>
<feature type="turn" evidence="17">
    <location>
        <begin position="55"/>
        <end position="57"/>
    </location>
</feature>
<feature type="strand" evidence="17">
    <location>
        <begin position="58"/>
        <end position="60"/>
    </location>
</feature>
<feature type="turn" evidence="17">
    <location>
        <begin position="64"/>
        <end position="66"/>
    </location>
</feature>
<feature type="strand" evidence="17">
    <location>
        <begin position="67"/>
        <end position="69"/>
    </location>
</feature>
<feature type="strand" evidence="17">
    <location>
        <begin position="75"/>
        <end position="77"/>
    </location>
</feature>
<feature type="strand" evidence="17">
    <location>
        <begin position="79"/>
        <end position="83"/>
    </location>
</feature>
<feature type="turn" evidence="15">
    <location>
        <begin position="86"/>
        <end position="89"/>
    </location>
</feature>
<feature type="strand" evidence="17">
    <location>
        <begin position="92"/>
        <end position="97"/>
    </location>
</feature>
<feature type="strand" evidence="17">
    <location>
        <begin position="108"/>
        <end position="115"/>
    </location>
</feature>
<feature type="turn" evidence="17">
    <location>
        <begin position="116"/>
        <end position="118"/>
    </location>
</feature>
<feature type="strand" evidence="17">
    <location>
        <begin position="119"/>
        <end position="125"/>
    </location>
</feature>
<feature type="strand" evidence="17">
    <location>
        <begin position="135"/>
        <end position="142"/>
    </location>
</feature>
<feature type="turn" evidence="18">
    <location>
        <begin position="143"/>
        <end position="146"/>
    </location>
</feature>
<feature type="strand" evidence="17">
    <location>
        <begin position="148"/>
        <end position="150"/>
    </location>
</feature>
<feature type="strand" evidence="17">
    <location>
        <begin position="153"/>
        <end position="156"/>
    </location>
</feature>
<feature type="strand" evidence="18">
    <location>
        <begin position="158"/>
        <end position="160"/>
    </location>
</feature>
<feature type="strand" evidence="17">
    <location>
        <begin position="162"/>
        <end position="168"/>
    </location>
</feature>
<feature type="helix" evidence="17">
    <location>
        <begin position="170"/>
        <end position="174"/>
    </location>
</feature>
<feature type="strand" evidence="17">
    <location>
        <begin position="179"/>
        <end position="187"/>
    </location>
</feature>
<feature type="strand" evidence="17">
    <location>
        <begin position="189"/>
        <end position="191"/>
    </location>
</feature>
<feature type="strand" evidence="17">
    <location>
        <begin position="196"/>
        <end position="201"/>
    </location>
</feature>
<feature type="helix" evidence="17">
    <location>
        <begin position="202"/>
        <end position="204"/>
    </location>
</feature>
<feature type="strand" evidence="17">
    <location>
        <begin position="212"/>
        <end position="216"/>
    </location>
</feature>
<feature type="strand" evidence="17">
    <location>
        <begin position="219"/>
        <end position="227"/>
    </location>
</feature>
<feature type="strand" evidence="17">
    <location>
        <begin position="236"/>
        <end position="243"/>
    </location>
</feature>
<feature type="strand" evidence="17">
    <location>
        <begin position="250"/>
        <end position="256"/>
    </location>
</feature>
<feature type="strand" evidence="17">
    <location>
        <begin position="258"/>
        <end position="264"/>
    </location>
</feature>
<feature type="strand" evidence="17">
    <location>
        <begin position="266"/>
        <end position="276"/>
    </location>
</feature>
<feature type="turn" evidence="17">
    <location>
        <begin position="277"/>
        <end position="279"/>
    </location>
</feature>
<feature type="strand" evidence="17">
    <location>
        <begin position="289"/>
        <end position="292"/>
    </location>
</feature>
<evidence type="ECO:0000250" key="1">
    <source>
        <dbReference type="UniProtKB" id="P26952"/>
    </source>
</evidence>
<evidence type="ECO:0000255" key="2"/>
<evidence type="ECO:0000269" key="3">
    <source>
    </source>
</evidence>
<evidence type="ECO:0000269" key="4">
    <source>
    </source>
</evidence>
<evidence type="ECO:0000269" key="5">
    <source>
    </source>
</evidence>
<evidence type="ECO:0000269" key="6">
    <source>
    </source>
</evidence>
<evidence type="ECO:0000269" key="7">
    <source>
    </source>
</evidence>
<evidence type="ECO:0000269" key="8">
    <source ref="5"/>
</evidence>
<evidence type="ECO:0000303" key="9">
    <source>
    </source>
</evidence>
<evidence type="ECO:0000305" key="10"/>
<evidence type="ECO:0000312" key="11">
    <source>
        <dbReference type="HGNC" id="HGNC:6012"/>
    </source>
</evidence>
<evidence type="ECO:0007744" key="12">
    <source>
        <dbReference type="PDB" id="4JZJ"/>
    </source>
</evidence>
<evidence type="ECO:0007744" key="13">
    <source>
        <dbReference type="PDB" id="5UV8"/>
    </source>
</evidence>
<evidence type="ECO:0007744" key="14">
    <source>
        <dbReference type="PDB" id="5UWC"/>
    </source>
</evidence>
<evidence type="ECO:0007829" key="15">
    <source>
        <dbReference type="PDB" id="4JZJ"/>
    </source>
</evidence>
<evidence type="ECO:0007829" key="16">
    <source>
        <dbReference type="PDB" id="5UV8"/>
    </source>
</evidence>
<evidence type="ECO:0007829" key="17">
    <source>
        <dbReference type="PDB" id="5UWC"/>
    </source>
</evidence>
<evidence type="ECO:0007829" key="18">
    <source>
        <dbReference type="PDB" id="6NMY"/>
    </source>
</evidence>
<dbReference type="EMBL" id="M74782">
    <property type="protein sequence ID" value="AAA59148.1"/>
    <property type="molecule type" value="mRNA"/>
</dbReference>
<dbReference type="EMBL" id="D49410">
    <property type="protein sequence ID" value="BAA08393.1"/>
    <property type="status" value="ALT_SEQ"/>
    <property type="molecule type" value="Genomic_DNA"/>
</dbReference>
<dbReference type="EMBL" id="FJ550347">
    <property type="protein sequence ID" value="ACM24116.1"/>
    <property type="molecule type" value="mRNA"/>
</dbReference>
<dbReference type="EMBL" id="AK290568">
    <property type="protein sequence ID" value="BAF83257.1"/>
    <property type="molecule type" value="mRNA"/>
</dbReference>
<dbReference type="EMBL" id="AY789109">
    <property type="protein sequence ID" value="AAV40832.1"/>
    <property type="molecule type" value="Genomic_DNA"/>
</dbReference>
<dbReference type="EMBL" id="BX296563">
    <property type="protein sequence ID" value="CAI39694.1"/>
    <property type="molecule type" value="Genomic_DNA"/>
</dbReference>
<dbReference type="EMBL" id="AL683870">
    <property type="protein sequence ID" value="CAI39694.1"/>
    <property type="status" value="JOINED"/>
    <property type="molecule type" value="Genomic_DNA"/>
</dbReference>
<dbReference type="EMBL" id="BX119906">
    <property type="protein sequence ID" value="CAI39694.1"/>
    <property type="status" value="JOINED"/>
    <property type="molecule type" value="Genomic_DNA"/>
</dbReference>
<dbReference type="EMBL" id="BX296563">
    <property type="protein sequence ID" value="CAI39695.1"/>
    <property type="molecule type" value="Genomic_DNA"/>
</dbReference>
<dbReference type="EMBL" id="BX119906">
    <property type="protein sequence ID" value="CAI39695.1"/>
    <property type="status" value="JOINED"/>
    <property type="molecule type" value="Genomic_DNA"/>
</dbReference>
<dbReference type="EMBL" id="BX901885">
    <property type="status" value="NOT_ANNOTATED_CDS"/>
    <property type="molecule type" value="Genomic_DNA"/>
</dbReference>
<dbReference type="EMBL" id="BC035407">
    <property type="protein sequence ID" value="AAH35407.1"/>
    <property type="molecule type" value="mRNA"/>
</dbReference>
<dbReference type="CCDS" id="CCDS14113.1">
    <molecule id="P26951-1"/>
</dbReference>
<dbReference type="CCDS" id="CCDS59158.1">
    <molecule id="P26951-2"/>
</dbReference>
<dbReference type="PIR" id="A40266">
    <property type="entry name" value="A40266"/>
</dbReference>
<dbReference type="RefSeq" id="NP_001254642.1">
    <molecule id="P26951-2"/>
    <property type="nucleotide sequence ID" value="NM_001267713.2"/>
</dbReference>
<dbReference type="RefSeq" id="NP_002174.1">
    <molecule id="P26951-1"/>
    <property type="nucleotide sequence ID" value="NM_002183.4"/>
</dbReference>
<dbReference type="RefSeq" id="XP_005274488.1">
    <molecule id="P26951-1"/>
    <property type="nucleotide sequence ID" value="XM_005274431.6"/>
</dbReference>
<dbReference type="RefSeq" id="XP_005274837.1">
    <molecule id="P26951-1"/>
    <property type="nucleotide sequence ID" value="XM_005274780.6"/>
</dbReference>
<dbReference type="RefSeq" id="XP_054182990.1">
    <molecule id="P26951-1"/>
    <property type="nucleotide sequence ID" value="XM_054327015.1"/>
</dbReference>
<dbReference type="PDB" id="4JZJ">
    <property type="method" value="X-ray"/>
    <property type="resolution" value="2.80 A"/>
    <property type="chains" value="C/D=20-307"/>
</dbReference>
<dbReference type="PDB" id="5UV8">
    <property type="method" value="X-ray"/>
    <property type="resolution" value="2.70 A"/>
    <property type="chains" value="A/G=20-307"/>
</dbReference>
<dbReference type="PDB" id="5UWC">
    <property type="method" value="X-ray"/>
    <property type="resolution" value="2.40 A"/>
    <property type="chains" value="G=20-307"/>
</dbReference>
<dbReference type="PDB" id="6NMY">
    <property type="method" value="X-ray"/>
    <property type="resolution" value="3.30 A"/>
    <property type="chains" value="F/M=20-307"/>
</dbReference>
<dbReference type="PDBsum" id="4JZJ"/>
<dbReference type="PDBsum" id="5UV8"/>
<dbReference type="PDBsum" id="5UWC"/>
<dbReference type="PDBsum" id="6NMY"/>
<dbReference type="EMDB" id="EMD-41369"/>
<dbReference type="SMR" id="P26951"/>
<dbReference type="BioGRID" id="109778">
    <property type="interactions" value="90"/>
</dbReference>
<dbReference type="ComplexPortal" id="CPX-9224">
    <property type="entry name" value="Interleukin-3 receptor-ligand complex"/>
</dbReference>
<dbReference type="CORUM" id="P26951"/>
<dbReference type="DIP" id="DIP-3293N"/>
<dbReference type="FunCoup" id="P26951">
    <property type="interactions" value="794"/>
</dbReference>
<dbReference type="IntAct" id="P26951">
    <property type="interactions" value="50"/>
</dbReference>
<dbReference type="STRING" id="9606.ENSP00000327890"/>
<dbReference type="ChEMBL" id="CHEMBL3712987"/>
<dbReference type="DrugBank" id="DB19130">
    <property type="generic name" value="Relmapirazin"/>
</dbReference>
<dbReference type="DrugBank" id="DB00020">
    <property type="generic name" value="Sargramostim"/>
</dbReference>
<dbReference type="DrugBank" id="DB14731">
    <property type="generic name" value="Tagraxofusp"/>
</dbReference>
<dbReference type="DrugCentral" id="P26951"/>
<dbReference type="GlyCosmos" id="P26951">
    <property type="glycosylation" value="6 sites, No reported glycans"/>
</dbReference>
<dbReference type="GlyGen" id="P26951">
    <property type="glycosylation" value="9 sites"/>
</dbReference>
<dbReference type="iPTMnet" id="P26951"/>
<dbReference type="PhosphoSitePlus" id="P26951"/>
<dbReference type="BioMuta" id="IL3RA"/>
<dbReference type="DMDM" id="417184"/>
<dbReference type="MassIVE" id="P26951"/>
<dbReference type="PaxDb" id="9606-ENSP00000327890"/>
<dbReference type="PeptideAtlas" id="P26951"/>
<dbReference type="ProteomicsDB" id="54369">
    <molecule id="P26951-1"/>
</dbReference>
<dbReference type="ProteomicsDB" id="54370">
    <molecule id="P26951-2"/>
</dbReference>
<dbReference type="ABCD" id="P26951">
    <property type="antibodies" value="61 sequenced antibodies"/>
</dbReference>
<dbReference type="Antibodypedia" id="565">
    <property type="antibodies" value="1325 antibodies from 46 providers"/>
</dbReference>
<dbReference type="DNASU" id="3563"/>
<dbReference type="Ensembl" id="ENST00000331035.10">
    <molecule id="P26951-1"/>
    <property type="protein sequence ID" value="ENSP00000327890.4"/>
    <property type="gene ID" value="ENSG00000185291.12"/>
</dbReference>
<dbReference type="Ensembl" id="ENST00000381469.7">
    <molecule id="P26951-2"/>
    <property type="protein sequence ID" value="ENSP00000370878.2"/>
    <property type="gene ID" value="ENSG00000185291.12"/>
</dbReference>
<dbReference type="Ensembl" id="ENST00000711217.1">
    <molecule id="P26951-2"/>
    <property type="protein sequence ID" value="ENSP00000518612.1"/>
    <property type="gene ID" value="ENSG00000292332.1"/>
</dbReference>
<dbReference type="Ensembl" id="ENST00000711219.1">
    <molecule id="P26951-1"/>
    <property type="protein sequence ID" value="ENSP00000518590.1"/>
    <property type="gene ID" value="ENSG00000292332.1"/>
</dbReference>
<dbReference type="GeneID" id="3563"/>
<dbReference type="KEGG" id="hsa:3563"/>
<dbReference type="MANE-Select" id="ENST00000331035.10">
    <property type="protein sequence ID" value="ENSP00000327890.4"/>
    <property type="RefSeq nucleotide sequence ID" value="NM_002183.4"/>
    <property type="RefSeq protein sequence ID" value="NP_002174.1"/>
</dbReference>
<dbReference type="UCSC" id="uc004cps.4">
    <molecule id="P26951-1"/>
    <property type="organism name" value="human"/>
</dbReference>
<dbReference type="AGR" id="HGNC:6012"/>
<dbReference type="CTD" id="3563"/>
<dbReference type="DisGeNET" id="3563"/>
<dbReference type="GeneCards" id="IL3RA"/>
<dbReference type="HGNC" id="HGNC:6012">
    <property type="gene designation" value="IL3RA"/>
</dbReference>
<dbReference type="HPA" id="ENSG00000185291">
    <property type="expression patterns" value="Low tissue specificity"/>
</dbReference>
<dbReference type="MalaCards" id="IL3RA"/>
<dbReference type="MIM" id="308385">
    <property type="type" value="gene"/>
</dbReference>
<dbReference type="MIM" id="430000">
    <property type="type" value="gene"/>
</dbReference>
<dbReference type="neXtProt" id="NX_P26951"/>
<dbReference type="OpenTargets" id="ENSG00000185291"/>
<dbReference type="PharmGKB" id="PA29831"/>
<dbReference type="VEuPathDB" id="HostDB:ENSG00000185291"/>
<dbReference type="eggNOG" id="ENOG502RZVR">
    <property type="taxonomic scope" value="Eukaryota"/>
</dbReference>
<dbReference type="GeneTree" id="ENSGT00940000163802"/>
<dbReference type="HOGENOM" id="CLU_039627_2_0_1"/>
<dbReference type="InParanoid" id="P26951"/>
<dbReference type="OMA" id="FLTCSWE"/>
<dbReference type="PAN-GO" id="P26951">
    <property type="GO annotations" value="5 GO annotations based on evolutionary models"/>
</dbReference>
<dbReference type="PhylomeDB" id="P26951"/>
<dbReference type="TreeFam" id="TF331549"/>
<dbReference type="PathwayCommons" id="P26951"/>
<dbReference type="Reactome" id="R-HSA-512988">
    <property type="pathway name" value="Interleukin-3, Interleukin-5 and GM-CSF signaling"/>
</dbReference>
<dbReference type="Reactome" id="R-HSA-5673001">
    <property type="pathway name" value="RAF/MAP kinase cascade"/>
</dbReference>
<dbReference type="Reactome" id="R-HSA-912526">
    <property type="pathway name" value="Interleukin receptor SHC signaling"/>
</dbReference>
<dbReference type="SignaLink" id="P26951"/>
<dbReference type="SIGNOR" id="P26951"/>
<dbReference type="BioGRID-ORCS" id="3563">
    <property type="hits" value="14 hits in 625 CRISPR screens"/>
</dbReference>
<dbReference type="ChiTaRS" id="IL3RA">
    <property type="organism name" value="human"/>
</dbReference>
<dbReference type="EvolutionaryTrace" id="P26951"/>
<dbReference type="GeneWiki" id="IL3RA"/>
<dbReference type="GenomeRNAi" id="3563"/>
<dbReference type="Pharos" id="P26951">
    <property type="development level" value="Tclin"/>
</dbReference>
<dbReference type="PRO" id="PR:P26951"/>
<dbReference type="Proteomes" id="UP000005640">
    <property type="component" value="Chromosome X"/>
</dbReference>
<dbReference type="Proteomes" id="UP000005640">
    <property type="component" value="Chromosome Y"/>
</dbReference>
<dbReference type="RNAct" id="P26951">
    <property type="molecule type" value="protein"/>
</dbReference>
<dbReference type="Bgee" id="ENSG00000185291">
    <property type="expression patterns" value="Expressed in right uterine tube and 118 other cell types or tissues"/>
</dbReference>
<dbReference type="ExpressionAtlas" id="P26951">
    <property type="expression patterns" value="baseline and differential"/>
</dbReference>
<dbReference type="GO" id="GO:0009897">
    <property type="term" value="C:external side of plasma membrane"/>
    <property type="evidence" value="ECO:0000318"/>
    <property type="project" value="GO_Central"/>
</dbReference>
<dbReference type="GO" id="GO:0005886">
    <property type="term" value="C:plasma membrane"/>
    <property type="evidence" value="ECO:0000304"/>
    <property type="project" value="Reactome"/>
</dbReference>
<dbReference type="GO" id="GO:0043235">
    <property type="term" value="C:receptor complex"/>
    <property type="evidence" value="ECO:0000318"/>
    <property type="project" value="GO_Central"/>
</dbReference>
<dbReference type="GO" id="GO:0019955">
    <property type="term" value="F:cytokine binding"/>
    <property type="evidence" value="ECO:0000318"/>
    <property type="project" value="GO_Central"/>
</dbReference>
<dbReference type="GO" id="GO:0004896">
    <property type="term" value="F:cytokine receptor activity"/>
    <property type="evidence" value="ECO:0000318"/>
    <property type="project" value="GO_Central"/>
</dbReference>
<dbReference type="GO" id="GO:0004912">
    <property type="term" value="F:interleukin-3 receptor activity"/>
    <property type="evidence" value="ECO:0000314"/>
    <property type="project" value="UniProt"/>
</dbReference>
<dbReference type="GO" id="GO:0019221">
    <property type="term" value="P:cytokine-mediated signaling pathway"/>
    <property type="evidence" value="ECO:0000318"/>
    <property type="project" value="GO_Central"/>
</dbReference>
<dbReference type="GO" id="GO:0038156">
    <property type="term" value="P:interleukin-3-mediated signaling pathway"/>
    <property type="evidence" value="ECO:0000314"/>
    <property type="project" value="UniProt"/>
</dbReference>
<dbReference type="GO" id="GO:0008284">
    <property type="term" value="P:positive regulation of cell population proliferation"/>
    <property type="evidence" value="ECO:0000318"/>
    <property type="project" value="GO_Central"/>
</dbReference>
<dbReference type="FunFam" id="2.60.40.10:FF:002832">
    <property type="entry name" value="Interleukin-3 receptor subunit alpha"/>
    <property type="match status" value="1"/>
</dbReference>
<dbReference type="FunFam" id="2.60.40.3850:FF:000001">
    <property type="entry name" value="Interleukin-3 receptor subunit alpha"/>
    <property type="match status" value="1"/>
</dbReference>
<dbReference type="FunFam" id="2.60.40.10:FF:002464">
    <property type="entry name" value="interleukin-3 receptor subunit alpha"/>
    <property type="match status" value="1"/>
</dbReference>
<dbReference type="Gene3D" id="2.60.40.3850">
    <property type="match status" value="1"/>
</dbReference>
<dbReference type="Gene3D" id="2.60.40.10">
    <property type="entry name" value="Immunoglobulins"/>
    <property type="match status" value="2"/>
</dbReference>
<dbReference type="InterPro" id="IPR036116">
    <property type="entry name" value="FN3_sf"/>
</dbReference>
<dbReference type="InterPro" id="IPR013783">
    <property type="entry name" value="Ig-like_fold"/>
</dbReference>
<dbReference type="InterPro" id="IPR040907">
    <property type="entry name" value="IL3Ra_N"/>
</dbReference>
<dbReference type="InterPro" id="IPR003532">
    <property type="entry name" value="Short_hematopoietin_rcpt_2_CS"/>
</dbReference>
<dbReference type="InterPro" id="IPR015321">
    <property type="entry name" value="TypeI_recpt_CBD"/>
</dbReference>
<dbReference type="PANTHER" id="PTHR23037">
    <property type="entry name" value="CYTOKINE RECEPTOR"/>
    <property type="match status" value="1"/>
</dbReference>
<dbReference type="PANTHER" id="PTHR23037:SF46">
    <property type="entry name" value="INTERLEUKIN 5 RECEPTOR SUBUNIT ALPHA"/>
    <property type="match status" value="1"/>
</dbReference>
<dbReference type="Pfam" id="PF18611">
    <property type="entry name" value="IL3Ra_N"/>
    <property type="match status" value="1"/>
</dbReference>
<dbReference type="Pfam" id="PF09240">
    <property type="entry name" value="IL6Ra-bind"/>
    <property type="match status" value="1"/>
</dbReference>
<dbReference type="SUPFAM" id="SSF49265">
    <property type="entry name" value="Fibronectin type III"/>
    <property type="match status" value="2"/>
</dbReference>
<dbReference type="PROSITE" id="PS01356">
    <property type="entry name" value="HEMATOPO_REC_S_F2"/>
    <property type="match status" value="1"/>
</dbReference>
<accession>P26951</accession>
<accession>A8K3F3</accession>
<accession>B9VI81</accession>
<accession>Q5HYQ7</accession>
<accession>Q5HYQ8</accession>
<accession>Q9UEH7</accession>
<organism>
    <name type="scientific">Homo sapiens</name>
    <name type="common">Human</name>
    <dbReference type="NCBI Taxonomy" id="9606"/>
    <lineage>
        <taxon>Eukaryota</taxon>
        <taxon>Metazoa</taxon>
        <taxon>Chordata</taxon>
        <taxon>Craniata</taxon>
        <taxon>Vertebrata</taxon>
        <taxon>Euteleostomi</taxon>
        <taxon>Mammalia</taxon>
        <taxon>Eutheria</taxon>
        <taxon>Euarchontoglires</taxon>
        <taxon>Primates</taxon>
        <taxon>Haplorrhini</taxon>
        <taxon>Catarrhini</taxon>
        <taxon>Hominidae</taxon>
        <taxon>Homo</taxon>
    </lineage>
</organism>